<dbReference type="EMBL" id="AL445563">
    <property type="protein sequence ID" value="CAC13183.1"/>
    <property type="molecule type" value="Genomic_DNA"/>
</dbReference>
<dbReference type="PIR" id="B90513">
    <property type="entry name" value="B90513"/>
</dbReference>
<dbReference type="RefSeq" id="WP_010924814.1">
    <property type="nucleotide sequence ID" value="NC_002771.1"/>
</dbReference>
<dbReference type="SMR" id="Q98RJ8"/>
<dbReference type="STRING" id="272635.gene:17576589"/>
<dbReference type="KEGG" id="mpu:MYPU_0100"/>
<dbReference type="eggNOG" id="COG0081">
    <property type="taxonomic scope" value="Bacteria"/>
</dbReference>
<dbReference type="HOGENOM" id="CLU_062853_0_0_14"/>
<dbReference type="BioCyc" id="MPUL272635:G1GT6-10-MONOMER"/>
<dbReference type="Proteomes" id="UP000000528">
    <property type="component" value="Chromosome"/>
</dbReference>
<dbReference type="GO" id="GO:0015934">
    <property type="term" value="C:large ribosomal subunit"/>
    <property type="evidence" value="ECO:0007669"/>
    <property type="project" value="InterPro"/>
</dbReference>
<dbReference type="GO" id="GO:0019843">
    <property type="term" value="F:rRNA binding"/>
    <property type="evidence" value="ECO:0007669"/>
    <property type="project" value="UniProtKB-UniRule"/>
</dbReference>
<dbReference type="GO" id="GO:0003735">
    <property type="term" value="F:structural constituent of ribosome"/>
    <property type="evidence" value="ECO:0007669"/>
    <property type="project" value="InterPro"/>
</dbReference>
<dbReference type="GO" id="GO:0000049">
    <property type="term" value="F:tRNA binding"/>
    <property type="evidence" value="ECO:0007669"/>
    <property type="project" value="UniProtKB-KW"/>
</dbReference>
<dbReference type="GO" id="GO:0006417">
    <property type="term" value="P:regulation of translation"/>
    <property type="evidence" value="ECO:0007669"/>
    <property type="project" value="UniProtKB-KW"/>
</dbReference>
<dbReference type="GO" id="GO:0006412">
    <property type="term" value="P:translation"/>
    <property type="evidence" value="ECO:0007669"/>
    <property type="project" value="UniProtKB-UniRule"/>
</dbReference>
<dbReference type="CDD" id="cd00403">
    <property type="entry name" value="Ribosomal_L1"/>
    <property type="match status" value="1"/>
</dbReference>
<dbReference type="FunFam" id="3.40.50.790:FF:000001">
    <property type="entry name" value="50S ribosomal protein L1"/>
    <property type="match status" value="1"/>
</dbReference>
<dbReference type="Gene3D" id="3.30.190.20">
    <property type="match status" value="1"/>
</dbReference>
<dbReference type="Gene3D" id="3.40.50.790">
    <property type="match status" value="1"/>
</dbReference>
<dbReference type="HAMAP" id="MF_01318_B">
    <property type="entry name" value="Ribosomal_uL1_B"/>
    <property type="match status" value="1"/>
</dbReference>
<dbReference type="InterPro" id="IPR005878">
    <property type="entry name" value="Ribosom_uL1_bac-type"/>
</dbReference>
<dbReference type="InterPro" id="IPR002143">
    <property type="entry name" value="Ribosomal_uL1"/>
</dbReference>
<dbReference type="InterPro" id="IPR023674">
    <property type="entry name" value="Ribosomal_uL1-like"/>
</dbReference>
<dbReference type="InterPro" id="IPR028364">
    <property type="entry name" value="Ribosomal_uL1/biogenesis"/>
</dbReference>
<dbReference type="InterPro" id="IPR016095">
    <property type="entry name" value="Ribosomal_uL1_3-a/b-sand"/>
</dbReference>
<dbReference type="InterPro" id="IPR023673">
    <property type="entry name" value="Ribosomal_uL1_CS"/>
</dbReference>
<dbReference type="NCBIfam" id="TIGR01169">
    <property type="entry name" value="rplA_bact"/>
    <property type="match status" value="1"/>
</dbReference>
<dbReference type="PANTHER" id="PTHR36427">
    <property type="entry name" value="54S RIBOSOMAL PROTEIN L1, MITOCHONDRIAL"/>
    <property type="match status" value="1"/>
</dbReference>
<dbReference type="PANTHER" id="PTHR36427:SF3">
    <property type="entry name" value="LARGE RIBOSOMAL SUBUNIT PROTEIN UL1M"/>
    <property type="match status" value="1"/>
</dbReference>
<dbReference type="Pfam" id="PF00687">
    <property type="entry name" value="Ribosomal_L1"/>
    <property type="match status" value="1"/>
</dbReference>
<dbReference type="PIRSF" id="PIRSF002155">
    <property type="entry name" value="Ribosomal_L1"/>
    <property type="match status" value="1"/>
</dbReference>
<dbReference type="SUPFAM" id="SSF56808">
    <property type="entry name" value="Ribosomal protein L1"/>
    <property type="match status" value="1"/>
</dbReference>
<dbReference type="PROSITE" id="PS01199">
    <property type="entry name" value="RIBOSOMAL_L1"/>
    <property type="match status" value="1"/>
</dbReference>
<sequence>MAKIGKKLQEAKKLVDKNQFYPLIEAIQLAKKTSYSKFDASIDLAFRLNLDTRKADQQLRGSILLPHGNGKVTRVLVATDSPELQKSSKEAGADFVVDKLELEEIIKQNKFDFDVIVADPKMMPILGRYGKVLGPKGLMPNPKTGTVTPNPDKAVVEIKKGKANYRADKYGIVHSLIGKKSMSDDQLLDNAKVLIDTIKRLKPSVVKGTYIKNLTISSSMGPSIKIKLD</sequence>
<organism>
    <name type="scientific">Mycoplasmopsis pulmonis (strain UAB CTIP)</name>
    <name type="common">Mycoplasma pulmonis</name>
    <dbReference type="NCBI Taxonomy" id="272635"/>
    <lineage>
        <taxon>Bacteria</taxon>
        <taxon>Bacillati</taxon>
        <taxon>Mycoplasmatota</taxon>
        <taxon>Mycoplasmoidales</taxon>
        <taxon>Metamycoplasmataceae</taxon>
        <taxon>Mycoplasmopsis</taxon>
    </lineage>
</organism>
<protein>
    <recommendedName>
        <fullName evidence="1">Large ribosomal subunit protein uL1</fullName>
    </recommendedName>
    <alternativeName>
        <fullName evidence="2">50S ribosomal protein L1</fullName>
    </alternativeName>
</protein>
<proteinExistence type="inferred from homology"/>
<name>RL1_MYCPU</name>
<feature type="chain" id="PRO_0000125694" description="Large ribosomal subunit protein uL1">
    <location>
        <begin position="1"/>
        <end position="229"/>
    </location>
</feature>
<accession>Q98RJ8</accession>
<comment type="function">
    <text evidence="1">Binds directly to 23S rRNA. The L1 stalk is quite mobile in the ribosome, and is involved in E site tRNA release.</text>
</comment>
<comment type="function">
    <text evidence="1">Protein L1 is also a translational repressor protein, it controls the translation of the L11 operon by binding to its mRNA.</text>
</comment>
<comment type="subunit">
    <text evidence="1">Part of the 50S ribosomal subunit.</text>
</comment>
<comment type="similarity">
    <text evidence="1">Belongs to the universal ribosomal protein uL1 family.</text>
</comment>
<evidence type="ECO:0000255" key="1">
    <source>
        <dbReference type="HAMAP-Rule" id="MF_01318"/>
    </source>
</evidence>
<evidence type="ECO:0000305" key="2"/>
<keyword id="KW-1185">Reference proteome</keyword>
<keyword id="KW-0678">Repressor</keyword>
<keyword id="KW-0687">Ribonucleoprotein</keyword>
<keyword id="KW-0689">Ribosomal protein</keyword>
<keyword id="KW-0694">RNA-binding</keyword>
<keyword id="KW-0699">rRNA-binding</keyword>
<keyword id="KW-0810">Translation regulation</keyword>
<keyword id="KW-0820">tRNA-binding</keyword>
<reference key="1">
    <citation type="journal article" date="2001" name="Nucleic Acids Res.">
        <title>The complete genome sequence of the murine respiratory pathogen Mycoplasma pulmonis.</title>
        <authorList>
            <person name="Chambaud I."/>
            <person name="Heilig R."/>
            <person name="Ferris S."/>
            <person name="Barbe V."/>
            <person name="Samson D."/>
            <person name="Galisson F."/>
            <person name="Moszer I."/>
            <person name="Dybvig K."/>
            <person name="Wroblewski H."/>
            <person name="Viari A."/>
            <person name="Rocha E.P.C."/>
            <person name="Blanchard A."/>
        </authorList>
    </citation>
    <scope>NUCLEOTIDE SEQUENCE [LARGE SCALE GENOMIC DNA]</scope>
    <source>
        <strain>UAB CTIP</strain>
    </source>
</reference>
<gene>
    <name evidence="1" type="primary">rplA</name>
    <name type="ordered locus">MYPU_0100</name>
</gene>